<keyword id="KW-0053">Apoptosis</keyword>
<keyword id="KW-0256">Endoplasmic reticulum</keyword>
<keyword id="KW-0472">Membrane</keyword>
<keyword id="KW-1185">Reference proteome</keyword>
<keyword id="KW-0812">Transmembrane</keyword>
<keyword id="KW-1133">Transmembrane helix</keyword>
<comment type="function">
    <text evidence="2 5">Subunit of the oligosaccharyl transferase (OST) complex that catalyzes the initial transfer of a defined glycan (Glc(3)Man(9)GlcNAc(2) in eukaryotes) from the lipid carrier dolichol-pyrophosphate to an asparagine residue within an Asn-X-Ser/Thr consensus motif in nascent polypeptide chains, the first step in protein N-glycosylation. N-glycosylation occurs cotranslationally and the complex associates with the Sec61 complex at the channel-forming translocon complex that mediates protein translocation across the endoplasmic reticulum (ER). All subunits are required for a maximal enzyme activity (By similarity). Possesses cell death-inhibiting activity. Suppresses some programmed cell death in C.elegans (PubMed:7556086).</text>
</comment>
<comment type="pathway">
    <text>Protein modification; protein glycosylation.</text>
</comment>
<comment type="subunit">
    <text evidence="2">Component of the oligosaccharyltransferase (OST) complex.</text>
</comment>
<comment type="subcellular location">
    <subcellularLocation>
        <location evidence="1">Endoplasmic reticulum membrane</location>
        <topology evidence="1">Multi-pass membrane protein</topology>
    </subcellularLocation>
</comment>
<comment type="disruption phenotype">
    <text evidence="4">RNAi-mediated knock-down is mostly embryonic lethal. Embryogenesis proceeds more slowly and embryos are osmo-sensitive.</text>
</comment>
<comment type="similarity">
    <text evidence="6">Belongs to the DAD/OST2 family.</text>
</comment>
<name>DAD1_CAEEL</name>
<proteinExistence type="inferred from homology"/>
<reference key="1">
    <citation type="journal article" date="1995" name="EMBO J.">
        <title>dad-1, an endogenous programmed cell death suppressor in Caenorhabditis elegans and vertebrates.</title>
        <authorList>
            <person name="Sugimoto A."/>
            <person name="Hozak R.R."/>
            <person name="Nakashima T."/>
            <person name="Nishimoto T."/>
            <person name="Rothman J.H."/>
        </authorList>
    </citation>
    <scope>NUCLEOTIDE SEQUENCE [MRNA]</scope>
    <scope>FUNCTION</scope>
</reference>
<reference key="2">
    <citation type="journal article" date="1998" name="Science">
        <title>Genome sequence of the nematode C. elegans: a platform for investigating biology.</title>
        <authorList>
            <consortium name="The C. elegans sequencing consortium"/>
        </authorList>
    </citation>
    <scope>NUCLEOTIDE SEQUENCE [LARGE SCALE GENOMIC DNA]</scope>
    <source>
        <strain>Bristol N2</strain>
    </source>
</reference>
<reference key="3">
    <citation type="journal article" date="2013" name="PLoS ONE">
        <title>N-glycosylation is required for secretion and mitosis in C. elegans.</title>
        <authorList>
            <person name="Stevens J."/>
            <person name="Spang A."/>
        </authorList>
    </citation>
    <scope>FUNCTION</scope>
    <scope>DISRUPTION PHENOTYPE</scope>
</reference>
<dbReference type="EMBL" id="X89080">
    <property type="protein sequence ID" value="CAA61451.1"/>
    <property type="molecule type" value="mRNA"/>
</dbReference>
<dbReference type="EMBL" id="FO081416">
    <property type="protein sequence ID" value="CCD71478.1"/>
    <property type="molecule type" value="Genomic_DNA"/>
</dbReference>
<dbReference type="PIR" id="S59116">
    <property type="entry name" value="S59116"/>
</dbReference>
<dbReference type="RefSeq" id="NP_491889.1">
    <property type="nucleotide sequence ID" value="NM_059488.7"/>
</dbReference>
<dbReference type="SMR" id="P52872"/>
<dbReference type="BioGRID" id="37821">
    <property type="interactions" value="4"/>
</dbReference>
<dbReference type="ComplexPortal" id="CPX-968">
    <property type="entry name" value="Oligosaccharyltransferase complex"/>
</dbReference>
<dbReference type="DIP" id="DIP-24414N"/>
<dbReference type="FunCoup" id="P52872">
    <property type="interactions" value="2495"/>
</dbReference>
<dbReference type="IntAct" id="P52872">
    <property type="interactions" value="1"/>
</dbReference>
<dbReference type="STRING" id="6239.F57B10.10.1"/>
<dbReference type="PaxDb" id="6239-F57B10.10"/>
<dbReference type="PeptideAtlas" id="P52872"/>
<dbReference type="EnsemblMetazoa" id="F57B10.10.1">
    <property type="protein sequence ID" value="F57B10.10.1"/>
    <property type="gene ID" value="WBGene00000896"/>
</dbReference>
<dbReference type="GeneID" id="172370"/>
<dbReference type="KEGG" id="cel:CELE_F57B10.10"/>
<dbReference type="UCSC" id="F57B10.10.2">
    <property type="organism name" value="c. elegans"/>
</dbReference>
<dbReference type="AGR" id="WB:WBGene00000896"/>
<dbReference type="CTD" id="172370"/>
<dbReference type="WormBase" id="F57B10.10">
    <property type="protein sequence ID" value="CE11316"/>
    <property type="gene ID" value="WBGene00000896"/>
    <property type="gene designation" value="dad-1"/>
</dbReference>
<dbReference type="eggNOG" id="KOG1746">
    <property type="taxonomic scope" value="Eukaryota"/>
</dbReference>
<dbReference type="GeneTree" id="ENSGT00390000003324"/>
<dbReference type="HOGENOM" id="CLU_111220_2_1_1"/>
<dbReference type="InParanoid" id="P52872"/>
<dbReference type="OMA" id="HIILHIV"/>
<dbReference type="OrthoDB" id="445566at2759"/>
<dbReference type="PhylomeDB" id="P52872"/>
<dbReference type="UniPathway" id="UPA00378"/>
<dbReference type="PRO" id="PR:P52872"/>
<dbReference type="Proteomes" id="UP000001940">
    <property type="component" value="Chromosome I"/>
</dbReference>
<dbReference type="Bgee" id="WBGene00000896">
    <property type="expression patterns" value="Expressed in embryo and 4 other cell types or tissues"/>
</dbReference>
<dbReference type="GO" id="GO:0008250">
    <property type="term" value="C:oligosaccharyltransferase complex"/>
    <property type="evidence" value="ECO:0000318"/>
    <property type="project" value="GO_Central"/>
</dbReference>
<dbReference type="GO" id="GO:0006915">
    <property type="term" value="P:apoptotic process"/>
    <property type="evidence" value="ECO:0007669"/>
    <property type="project" value="UniProtKB-KW"/>
</dbReference>
<dbReference type="GO" id="GO:0043066">
    <property type="term" value="P:negative regulation of apoptotic process"/>
    <property type="evidence" value="ECO:0000314"/>
    <property type="project" value="WormBase"/>
</dbReference>
<dbReference type="GO" id="GO:0006487">
    <property type="term" value="P:protein N-linked glycosylation"/>
    <property type="evidence" value="ECO:0000318"/>
    <property type="project" value="GO_Central"/>
</dbReference>
<dbReference type="InterPro" id="IPR003038">
    <property type="entry name" value="DAD/Ost2"/>
</dbReference>
<dbReference type="PANTHER" id="PTHR10705">
    <property type="entry name" value="DOLICHYL-DIPHOSPHOOLIGOSACCHARIDE--PROTEIN GLYCOSYLTRANSFERASE SUBUNIT DAD1"/>
    <property type="match status" value="1"/>
</dbReference>
<dbReference type="PANTHER" id="PTHR10705:SF0">
    <property type="entry name" value="DOLICHYL-DIPHOSPHOOLIGOSACCHARIDE--PROTEIN GLYCOSYLTRANSFERASE SUBUNIT DAD1"/>
    <property type="match status" value="1"/>
</dbReference>
<dbReference type="Pfam" id="PF02109">
    <property type="entry name" value="DAD"/>
    <property type="match status" value="1"/>
</dbReference>
<dbReference type="PIRSF" id="PIRSF005588">
    <property type="entry name" value="DAD"/>
    <property type="match status" value="1"/>
</dbReference>
<sequence>MAAQVVPVLSKLFDDYQKTTSSKLKIIDAYMTYILFTGIFQFIYCLLVGTFPFNSFLSGFISTVTSFVLASCLRMQVNQENRSEFTAVSTERAFADFIFANLILHLVVVNFLG</sequence>
<protein>
    <recommendedName>
        <fullName>Dolichyl-diphosphooligosaccharide--protein glycosyltransferase subunit dad-1</fullName>
        <shortName>Oligosaccharyl transferase subunit dad-1</shortName>
    </recommendedName>
    <alternativeName>
        <fullName>Defender against cell death 1</fullName>
        <shortName>Protein dad-1</shortName>
    </alternativeName>
</protein>
<gene>
    <name evidence="7" type="primary">dad-1</name>
    <name evidence="7" type="ORF">F57B10.10</name>
</gene>
<accession>P52872</accession>
<evidence type="ECO:0000250" key="1"/>
<evidence type="ECO:0000250" key="2">
    <source>
        <dbReference type="UniProtKB" id="E2R4X3"/>
    </source>
</evidence>
<evidence type="ECO:0000255" key="3"/>
<evidence type="ECO:0000269" key="4">
    <source>
    </source>
</evidence>
<evidence type="ECO:0000269" key="5">
    <source>
    </source>
</evidence>
<evidence type="ECO:0000305" key="6"/>
<evidence type="ECO:0000312" key="7">
    <source>
        <dbReference type="WormBase" id="F57B10.10"/>
    </source>
</evidence>
<organism>
    <name type="scientific">Caenorhabditis elegans</name>
    <dbReference type="NCBI Taxonomy" id="6239"/>
    <lineage>
        <taxon>Eukaryota</taxon>
        <taxon>Metazoa</taxon>
        <taxon>Ecdysozoa</taxon>
        <taxon>Nematoda</taxon>
        <taxon>Chromadorea</taxon>
        <taxon>Rhabditida</taxon>
        <taxon>Rhabditina</taxon>
        <taxon>Rhabditomorpha</taxon>
        <taxon>Rhabditoidea</taxon>
        <taxon>Rhabditidae</taxon>
        <taxon>Peloderinae</taxon>
        <taxon>Caenorhabditis</taxon>
    </lineage>
</organism>
<feature type="chain" id="PRO_0000124017" description="Dolichyl-diphosphooligosaccharide--protein glycosyltransferase subunit dad-1">
    <location>
        <begin position="1"/>
        <end position="113"/>
    </location>
</feature>
<feature type="topological domain" description="Cytoplasmic" evidence="3">
    <location>
        <begin position="1"/>
        <end position="32"/>
    </location>
</feature>
<feature type="transmembrane region" description="Helical" evidence="3">
    <location>
        <begin position="33"/>
        <end position="53"/>
    </location>
</feature>
<feature type="topological domain" description="Lumenal" evidence="3">
    <location>
        <begin position="54"/>
        <end position="55"/>
    </location>
</feature>
<feature type="transmembrane region" description="Helical" evidence="3">
    <location>
        <begin position="56"/>
        <end position="78"/>
    </location>
</feature>
<feature type="topological domain" description="Cytoplasmic" evidence="3">
    <location>
        <begin position="79"/>
        <end position="92"/>
    </location>
</feature>
<feature type="transmembrane region" description="Helical" evidence="3">
    <location>
        <begin position="93"/>
        <end position="113"/>
    </location>
</feature>